<reference key="1">
    <citation type="journal article" date="2001" name="J. Immunol.">
        <title>A novel serum protein that is selectively produced by cytotoxic lymphocytes.</title>
        <authorList>
            <person name="Ogawa K."/>
            <person name="Tanaka K."/>
            <person name="Ishii A."/>
            <person name="Nakamura Y."/>
            <person name="Kondo S."/>
            <person name="Sugamura K."/>
            <person name="Takano S."/>
            <person name="Nakamura M."/>
            <person name="Nagata K."/>
        </authorList>
    </citation>
    <scope>NUCLEOTIDE SEQUENCE [MRNA]</scope>
    <scope>TISSUE SPECIFICITY</scope>
    <scope>SUBCELLULAR LOCATION</scope>
    <source>
        <tissue>Cytotoxic T-cell</tissue>
    </source>
</reference>
<reference key="2">
    <citation type="submission" date="2001-03" db="EMBL/GenBank/DDBJ databases">
        <title>cDNA encoding a human protein related to FGF-binding protein HBp17 (HBp17-RP).</title>
        <authorList>
            <person name="Sato J.D."/>
            <person name="Chapline M.C."/>
        </authorList>
    </citation>
    <scope>NUCLEOTIDE SEQUENCE [MRNA]</scope>
    <source>
        <tissue>Epidermal carcinoma</tissue>
    </source>
</reference>
<reference key="3">
    <citation type="journal article" date="2003" name="Genome Res.">
        <title>The secreted protein discovery initiative (SPDI), a large-scale effort to identify novel human secreted and transmembrane proteins: a bioinformatics assessment.</title>
        <authorList>
            <person name="Clark H.F."/>
            <person name="Gurney A.L."/>
            <person name="Abaya E."/>
            <person name="Baker K."/>
            <person name="Baldwin D.T."/>
            <person name="Brush J."/>
            <person name="Chen J."/>
            <person name="Chow B."/>
            <person name="Chui C."/>
            <person name="Crowley C."/>
            <person name="Currell B."/>
            <person name="Deuel B."/>
            <person name="Dowd P."/>
            <person name="Eaton D."/>
            <person name="Foster J.S."/>
            <person name="Grimaldi C."/>
            <person name="Gu Q."/>
            <person name="Hass P.E."/>
            <person name="Heldens S."/>
            <person name="Huang A."/>
            <person name="Kim H.S."/>
            <person name="Klimowski L."/>
            <person name="Jin Y."/>
            <person name="Johnson S."/>
            <person name="Lee J."/>
            <person name="Lewis L."/>
            <person name="Liao D."/>
            <person name="Mark M.R."/>
            <person name="Robbie E."/>
            <person name="Sanchez C."/>
            <person name="Schoenfeld J."/>
            <person name="Seshagiri S."/>
            <person name="Simmons L."/>
            <person name="Singh J."/>
            <person name="Smith V."/>
            <person name="Stinson J."/>
            <person name="Vagts A."/>
            <person name="Vandlen R.L."/>
            <person name="Watanabe C."/>
            <person name="Wieand D."/>
            <person name="Woods K."/>
            <person name="Xie M.-H."/>
            <person name="Yansura D.G."/>
            <person name="Yi S."/>
            <person name="Yu G."/>
            <person name="Yuan J."/>
            <person name="Zhang M."/>
            <person name="Zhang Z."/>
            <person name="Goddard A.D."/>
            <person name="Wood W.I."/>
            <person name="Godowski P.J."/>
            <person name="Gray A.M."/>
        </authorList>
    </citation>
    <scope>NUCLEOTIDE SEQUENCE [LARGE SCALE MRNA]</scope>
</reference>
<reference key="4">
    <citation type="journal article" date="2004" name="Genome Res.">
        <title>The status, quality, and expansion of the NIH full-length cDNA project: the Mammalian Gene Collection (MGC).</title>
        <authorList>
            <consortium name="The MGC Project Team"/>
        </authorList>
    </citation>
    <scope>NUCLEOTIDE SEQUENCE [LARGE SCALE MRNA]</scope>
    <source>
        <tissue>Pancreas</tissue>
    </source>
</reference>
<name>FGFP2_HUMAN</name>
<protein>
    <recommendedName>
        <fullName>Fibroblast growth factor-binding protein 2</fullName>
        <shortName>FGF-BP2</shortName>
        <shortName>FGF-binding protein 2</shortName>
        <shortName>FGFBP-2</shortName>
    </recommendedName>
    <alternativeName>
        <fullName>37 kDa killer-specific secretory protein</fullName>
        <shortName>Ksp37</shortName>
    </alternativeName>
    <alternativeName>
        <fullName>HBp17-related protein</fullName>
        <shortName>HBp17-RP</shortName>
    </alternativeName>
</protein>
<evidence type="ECO:0000250" key="1"/>
<evidence type="ECO:0000255" key="2"/>
<evidence type="ECO:0000256" key="3">
    <source>
        <dbReference type="SAM" id="MobiDB-lite"/>
    </source>
</evidence>
<evidence type="ECO:0000269" key="4">
    <source>
    </source>
</evidence>
<evidence type="ECO:0000305" key="5"/>
<keyword id="KW-1015">Disulfide bond</keyword>
<keyword id="KW-0340">Growth factor binding</keyword>
<keyword id="KW-1267">Proteomics identification</keyword>
<keyword id="KW-1185">Reference proteome</keyword>
<keyword id="KW-0964">Secreted</keyword>
<keyword id="KW-0732">Signal</keyword>
<organism>
    <name type="scientific">Homo sapiens</name>
    <name type="common">Human</name>
    <dbReference type="NCBI Taxonomy" id="9606"/>
    <lineage>
        <taxon>Eukaryota</taxon>
        <taxon>Metazoa</taxon>
        <taxon>Chordata</taxon>
        <taxon>Craniata</taxon>
        <taxon>Vertebrata</taxon>
        <taxon>Euteleostomi</taxon>
        <taxon>Mammalia</taxon>
        <taxon>Eutheria</taxon>
        <taxon>Euarchontoglires</taxon>
        <taxon>Primates</taxon>
        <taxon>Haplorrhini</taxon>
        <taxon>Catarrhini</taxon>
        <taxon>Hominidae</taxon>
        <taxon>Homo</taxon>
    </lineage>
</organism>
<accession>Q9BYJ0</accession>
<sequence length="223" mass="24581">MKFVPCLLLVTLSCLGTLGQAPRQKQGSTGEEFHFQTGGRDSCTMRPSSLGQGAGEVWLRVDCRNTDQTYWCEYRGQPSMCQAFAADPKPYWNQALQELRRLHHACQGAPVLRPSVCREAGPQAHMQQVTSSLKGSPEPNQQPEAGTPSLRPKATVKLTEATQLGKDSMEELGKAKPTTRPTAKPTQPGPRPGGNEEAKKKAWEHCWKPFQALCAFLISFFRG</sequence>
<feature type="signal peptide" evidence="2">
    <location>
        <begin position="1"/>
        <end position="19"/>
    </location>
</feature>
<feature type="chain" id="PRO_0000245860" description="Fibroblast growth factor-binding protein 2">
    <location>
        <begin position="20"/>
        <end position="223"/>
    </location>
</feature>
<feature type="region of interest" description="Disordered" evidence="3">
    <location>
        <begin position="23"/>
        <end position="45"/>
    </location>
</feature>
<feature type="region of interest" description="Disordered" evidence="3">
    <location>
        <begin position="120"/>
        <end position="201"/>
    </location>
</feature>
<feature type="compositionally biased region" description="Polar residues" evidence="3">
    <location>
        <begin position="125"/>
        <end position="144"/>
    </location>
</feature>
<feature type="compositionally biased region" description="Low complexity" evidence="3">
    <location>
        <begin position="175"/>
        <end position="186"/>
    </location>
</feature>
<feature type="disulfide bond" evidence="1">
    <location>
        <begin position="43"/>
        <end position="63"/>
    </location>
</feature>
<feature type="disulfide bond" evidence="1">
    <location>
        <begin position="72"/>
        <end position="106"/>
    </location>
</feature>
<feature type="disulfide bond" evidence="1">
    <location>
        <begin position="81"/>
        <end position="117"/>
    </location>
</feature>
<feature type="disulfide bond" evidence="1">
    <location>
        <begin position="206"/>
        <end position="214"/>
    </location>
</feature>
<feature type="sequence variant" id="VAR_061171" description="In dbSNP:rs35496730.">
    <original>S</original>
    <variation>N</variation>
    <location>
        <position position="28"/>
    </location>
</feature>
<feature type="sequence variant" id="VAR_059287" description="In dbSNP:rs2286459.">
    <original>F</original>
    <variation>L</variation>
    <location>
        <position position="84"/>
    </location>
</feature>
<feature type="sequence variant" id="VAR_049065" description="In dbSNP:rs758329.">
    <original>P</original>
    <variation>S</variation>
    <location>
        <position position="90"/>
    </location>
</feature>
<gene>
    <name type="primary">FGFBP2</name>
    <name type="synonym">KSP37</name>
    <name type="ORF">UNQ425/PRO1065</name>
</gene>
<comment type="interaction">
    <interactant intactId="EBI-12911356">
        <id>Q9BYJ0</id>
    </interactant>
    <interactant intactId="EBI-1045825">
        <id>P55061</id>
        <label>TMBIM6</label>
    </interactant>
    <organismsDiffer>false</organismsDiffer>
    <experiments>3</experiments>
</comment>
<comment type="subcellular location">
    <subcellularLocation>
        <location evidence="4">Secreted</location>
        <location evidence="4">Extracellular space</location>
    </subcellularLocation>
</comment>
<comment type="tissue specificity">
    <text evidence="4">Expressed in serum, peripheral leukocytes and cytotoxic T-lymphocytes, but not in granulocytes and monocytes (at protein level).</text>
</comment>
<comment type="similarity">
    <text evidence="5">Belongs to the fibroblast growth factor-binding protein family.</text>
</comment>
<dbReference type="EMBL" id="AB021123">
    <property type="protein sequence ID" value="BAB39770.1"/>
    <property type="molecule type" value="mRNA"/>
</dbReference>
<dbReference type="EMBL" id="AF361936">
    <property type="protein sequence ID" value="AAK51503.1"/>
    <property type="molecule type" value="mRNA"/>
</dbReference>
<dbReference type="EMBL" id="AY358978">
    <property type="protein sequence ID" value="AAQ89337.1"/>
    <property type="molecule type" value="mRNA"/>
</dbReference>
<dbReference type="EMBL" id="BC025720">
    <property type="protein sequence ID" value="AAH25720.1"/>
    <property type="molecule type" value="mRNA"/>
</dbReference>
<dbReference type="CCDS" id="CCDS3419.1"/>
<dbReference type="RefSeq" id="NP_114156.1">
    <property type="nucleotide sequence ID" value="NM_031950.4"/>
</dbReference>
<dbReference type="BioGRID" id="123799">
    <property type="interactions" value="5"/>
</dbReference>
<dbReference type="FunCoup" id="Q9BYJ0">
    <property type="interactions" value="2"/>
</dbReference>
<dbReference type="IntAct" id="Q9BYJ0">
    <property type="interactions" value="4"/>
</dbReference>
<dbReference type="STRING" id="9606.ENSP00000259989"/>
<dbReference type="GlyCosmos" id="Q9BYJ0">
    <property type="glycosylation" value="2 sites, 2 glycans"/>
</dbReference>
<dbReference type="GlyGen" id="Q9BYJ0">
    <property type="glycosylation" value="8 sites, 3 O-linked glycans (8 sites)"/>
</dbReference>
<dbReference type="iPTMnet" id="Q9BYJ0"/>
<dbReference type="PhosphoSitePlus" id="Q9BYJ0"/>
<dbReference type="BioMuta" id="FGFBP2"/>
<dbReference type="DMDM" id="74733476"/>
<dbReference type="jPOST" id="Q9BYJ0"/>
<dbReference type="MassIVE" id="Q9BYJ0"/>
<dbReference type="PaxDb" id="9606-ENSP00000259989"/>
<dbReference type="PeptideAtlas" id="Q9BYJ0"/>
<dbReference type="ProteomicsDB" id="79654"/>
<dbReference type="Antibodypedia" id="43624">
    <property type="antibodies" value="109 antibodies from 25 providers"/>
</dbReference>
<dbReference type="DNASU" id="83888"/>
<dbReference type="Ensembl" id="ENST00000259989.7">
    <property type="protein sequence ID" value="ENSP00000259989.6"/>
    <property type="gene ID" value="ENSG00000137441.8"/>
</dbReference>
<dbReference type="GeneID" id="83888"/>
<dbReference type="KEGG" id="hsa:83888"/>
<dbReference type="MANE-Select" id="ENST00000259989.7">
    <property type="protein sequence ID" value="ENSP00000259989.6"/>
    <property type="RefSeq nucleotide sequence ID" value="NM_031950.4"/>
    <property type="RefSeq protein sequence ID" value="NP_114156.1"/>
</dbReference>
<dbReference type="UCSC" id="uc003gon.4">
    <property type="organism name" value="human"/>
</dbReference>
<dbReference type="AGR" id="HGNC:29451"/>
<dbReference type="CTD" id="83888"/>
<dbReference type="DisGeNET" id="83888"/>
<dbReference type="GeneCards" id="FGFBP2"/>
<dbReference type="HGNC" id="HGNC:29451">
    <property type="gene designation" value="FGFBP2"/>
</dbReference>
<dbReference type="HPA" id="ENSG00000137441">
    <property type="expression patterns" value="Tissue enhanced (adipose tissue, bone marrow)"/>
</dbReference>
<dbReference type="MIM" id="607713">
    <property type="type" value="gene"/>
</dbReference>
<dbReference type="neXtProt" id="NX_Q9BYJ0"/>
<dbReference type="OpenTargets" id="ENSG00000137441"/>
<dbReference type="PharmGKB" id="PA162388435"/>
<dbReference type="VEuPathDB" id="HostDB:ENSG00000137441"/>
<dbReference type="eggNOG" id="ENOG502S0EZ">
    <property type="taxonomic scope" value="Eukaryota"/>
</dbReference>
<dbReference type="GeneTree" id="ENSGT00940000154372"/>
<dbReference type="HOGENOM" id="CLU_086542_0_0_1"/>
<dbReference type="InParanoid" id="Q9BYJ0"/>
<dbReference type="OMA" id="QGKSYWC"/>
<dbReference type="OrthoDB" id="8941648at2759"/>
<dbReference type="PAN-GO" id="Q9BYJ0">
    <property type="GO annotations" value="2 GO annotations based on evolutionary models"/>
</dbReference>
<dbReference type="PhylomeDB" id="Q9BYJ0"/>
<dbReference type="TreeFam" id="TF335877"/>
<dbReference type="PathwayCommons" id="Q9BYJ0"/>
<dbReference type="Reactome" id="R-HSA-190377">
    <property type="pathway name" value="FGFR2b ligand binding and activation"/>
</dbReference>
<dbReference type="SignaLink" id="Q9BYJ0"/>
<dbReference type="BioGRID-ORCS" id="83888">
    <property type="hits" value="14 hits in 1142 CRISPR screens"/>
</dbReference>
<dbReference type="GenomeRNAi" id="83888"/>
<dbReference type="Pharos" id="Q9BYJ0">
    <property type="development level" value="Tbio"/>
</dbReference>
<dbReference type="PRO" id="PR:Q9BYJ0"/>
<dbReference type="Proteomes" id="UP000005640">
    <property type="component" value="Chromosome 4"/>
</dbReference>
<dbReference type="RNAct" id="Q9BYJ0">
    <property type="molecule type" value="protein"/>
</dbReference>
<dbReference type="Bgee" id="ENSG00000137441">
    <property type="expression patterns" value="Expressed in tibia and 115 other cell types or tissues"/>
</dbReference>
<dbReference type="GO" id="GO:0005576">
    <property type="term" value="C:extracellular region"/>
    <property type="evidence" value="ECO:0007669"/>
    <property type="project" value="UniProtKB-SubCell"/>
</dbReference>
<dbReference type="GO" id="GO:0019838">
    <property type="term" value="F:growth factor binding"/>
    <property type="evidence" value="ECO:0000318"/>
    <property type="project" value="GO_Central"/>
</dbReference>
<dbReference type="GO" id="GO:0007267">
    <property type="term" value="P:cell-cell signaling"/>
    <property type="evidence" value="ECO:0000318"/>
    <property type="project" value="GO_Central"/>
</dbReference>
<dbReference type="InterPro" id="IPR010510">
    <property type="entry name" value="FGF1-bd"/>
</dbReference>
<dbReference type="PANTHER" id="PTHR15258">
    <property type="entry name" value="FGF BINDING PROTEIN-RELATED"/>
    <property type="match status" value="1"/>
</dbReference>
<dbReference type="PANTHER" id="PTHR15258:SF1">
    <property type="entry name" value="FIBROBLAST GROWTH FACTOR-BINDING PROTEIN 2"/>
    <property type="match status" value="1"/>
</dbReference>
<dbReference type="Pfam" id="PF06473">
    <property type="entry name" value="FGF-BP1"/>
    <property type="match status" value="1"/>
</dbReference>
<proteinExistence type="evidence at protein level"/>